<feature type="signal peptide" evidence="2">
    <location>
        <begin position="1"/>
        <end position="24"/>
    </location>
</feature>
<feature type="chain" id="PRO_0000289637" description="WAP four-disulfide core domain protein 5">
    <location>
        <begin position="25"/>
        <end position="123"/>
    </location>
</feature>
<feature type="domain" description="WAP 1" evidence="3">
    <location>
        <begin position="27"/>
        <end position="74"/>
    </location>
</feature>
<feature type="domain" description="WAP 2" evidence="3">
    <location>
        <begin position="75"/>
        <end position="121"/>
    </location>
</feature>
<feature type="disulfide bond" evidence="3">
    <location>
        <begin position="34"/>
        <end position="62"/>
    </location>
</feature>
<feature type="disulfide bond" evidence="3">
    <location>
        <begin position="41"/>
        <end position="66"/>
    </location>
</feature>
<feature type="disulfide bond" evidence="3">
    <location>
        <begin position="49"/>
        <end position="61"/>
    </location>
</feature>
<feature type="disulfide bond" evidence="3">
    <location>
        <begin position="55"/>
        <end position="70"/>
    </location>
</feature>
<feature type="disulfide bond" evidence="3">
    <location>
        <begin position="81"/>
        <end position="109"/>
    </location>
</feature>
<feature type="disulfide bond" evidence="3">
    <location>
        <begin position="88"/>
        <end position="113"/>
    </location>
</feature>
<feature type="disulfide bond" evidence="3">
    <location>
        <begin position="96"/>
        <end position="108"/>
    </location>
</feature>
<feature type="disulfide bond" evidence="3">
    <location>
        <begin position="102"/>
        <end position="117"/>
    </location>
</feature>
<name>WFDC5_GORGO</name>
<organism>
    <name type="scientific">Gorilla gorilla gorilla</name>
    <name type="common">Western lowland gorilla</name>
    <dbReference type="NCBI Taxonomy" id="9595"/>
    <lineage>
        <taxon>Eukaryota</taxon>
        <taxon>Metazoa</taxon>
        <taxon>Chordata</taxon>
        <taxon>Craniata</taxon>
        <taxon>Vertebrata</taxon>
        <taxon>Euteleostomi</taxon>
        <taxon>Mammalia</taxon>
        <taxon>Eutheria</taxon>
        <taxon>Euarchontoglires</taxon>
        <taxon>Primates</taxon>
        <taxon>Haplorrhini</taxon>
        <taxon>Catarrhini</taxon>
        <taxon>Hominidae</taxon>
        <taxon>Gorilla</taxon>
    </lineage>
</organism>
<keyword id="KW-1015">Disulfide bond</keyword>
<keyword id="KW-0646">Protease inhibitor</keyword>
<keyword id="KW-1185">Reference proteome</keyword>
<keyword id="KW-0677">Repeat</keyword>
<keyword id="KW-0964">Secreted</keyword>
<keyword id="KW-0722">Serine protease inhibitor</keyword>
<keyword id="KW-0732">Signal</keyword>
<accession>A4K2R4</accession>
<protein>
    <recommendedName>
        <fullName>WAP four-disulfide core domain protein 5</fullName>
    </recommendedName>
</protein>
<reference key="1">
    <citation type="journal article" date="2007" name="Genome Res.">
        <title>Comparative sequence analyses reveal rapid and divergent evolutionary changes of the WFDC locus in the primate lineage.</title>
        <authorList>
            <consortium name="NISC comparative sequencing program"/>
            <person name="Hurle B."/>
            <person name="Swanson W."/>
            <person name="Green E.D."/>
        </authorList>
    </citation>
    <scope>NUCLEOTIDE SEQUENCE [GENOMIC DNA]</scope>
</reference>
<evidence type="ECO:0000250" key="1"/>
<evidence type="ECO:0000255" key="2"/>
<evidence type="ECO:0000255" key="3">
    <source>
        <dbReference type="PROSITE-ProRule" id="PRU00722"/>
    </source>
</evidence>
<evidence type="ECO:0000305" key="4"/>
<dbReference type="EMBL" id="DP000041">
    <property type="protein sequence ID" value="ABO52949.1"/>
    <property type="molecule type" value="Genomic_DNA"/>
</dbReference>
<dbReference type="RefSeq" id="XP_004062267.1">
    <property type="nucleotide sequence ID" value="XM_004062219.5"/>
</dbReference>
<dbReference type="SMR" id="A4K2R4"/>
<dbReference type="STRING" id="9593.ENSGGOP00000002956"/>
<dbReference type="GeneID" id="101130398"/>
<dbReference type="KEGG" id="ggo:101130398"/>
<dbReference type="CTD" id="149708"/>
<dbReference type="eggNOG" id="ENOG502S99V">
    <property type="taxonomic scope" value="Eukaryota"/>
</dbReference>
<dbReference type="HOGENOM" id="CLU_1369111_0_0_1"/>
<dbReference type="InParanoid" id="A4K2R4"/>
<dbReference type="Proteomes" id="UP000001519">
    <property type="component" value="Unplaced"/>
</dbReference>
<dbReference type="GO" id="GO:0005615">
    <property type="term" value="C:extracellular space"/>
    <property type="evidence" value="ECO:0000318"/>
    <property type="project" value="GO_Central"/>
</dbReference>
<dbReference type="GO" id="GO:0004867">
    <property type="term" value="F:serine-type endopeptidase inhibitor activity"/>
    <property type="evidence" value="ECO:0000318"/>
    <property type="project" value="GO_Central"/>
</dbReference>
<dbReference type="GO" id="GO:0019731">
    <property type="term" value="P:antibacterial humoral response"/>
    <property type="evidence" value="ECO:0000318"/>
    <property type="project" value="GO_Central"/>
</dbReference>
<dbReference type="GO" id="GO:0045087">
    <property type="term" value="P:innate immune response"/>
    <property type="evidence" value="ECO:0000318"/>
    <property type="project" value="GO_Central"/>
</dbReference>
<dbReference type="Gene3D" id="4.10.75.10">
    <property type="entry name" value="Elafin-like"/>
    <property type="match status" value="2"/>
</dbReference>
<dbReference type="InterPro" id="IPR036645">
    <property type="entry name" value="Elafin-like_sf"/>
</dbReference>
<dbReference type="InterPro" id="IPR008197">
    <property type="entry name" value="WAP_dom"/>
</dbReference>
<dbReference type="InterPro" id="IPR050514">
    <property type="entry name" value="WAP_four-disulfide_core"/>
</dbReference>
<dbReference type="PANTHER" id="PTHR19441:SF39">
    <property type="entry name" value="WAP FOUR-DISULFIDE CORE DOMAIN PROTEIN 5"/>
    <property type="match status" value="1"/>
</dbReference>
<dbReference type="PANTHER" id="PTHR19441">
    <property type="entry name" value="WHEY ACDIC PROTEIN WAP"/>
    <property type="match status" value="1"/>
</dbReference>
<dbReference type="Pfam" id="PF00095">
    <property type="entry name" value="WAP"/>
    <property type="match status" value="2"/>
</dbReference>
<dbReference type="PRINTS" id="PR00003">
    <property type="entry name" value="4DISULPHCORE"/>
</dbReference>
<dbReference type="SMART" id="SM00217">
    <property type="entry name" value="WAP"/>
    <property type="match status" value="2"/>
</dbReference>
<dbReference type="SUPFAM" id="SSF57256">
    <property type="entry name" value="Elafin-like"/>
    <property type="match status" value="2"/>
</dbReference>
<dbReference type="PROSITE" id="PS51390">
    <property type="entry name" value="WAP"/>
    <property type="match status" value="2"/>
</dbReference>
<sequence length="123" mass="13293">MRTQSLLLLGALLAVGSQLPAVFGRKKGEKSGGCPPDDGPCLLSVPDQCVEDSQCPLTRKCCYRACFRQCVPRVSVKLGSCPEDQLHCLSPMNHLCHKDSDCSGKKRCCHSACGRDCRDPARG</sequence>
<gene>
    <name type="primary">WFDC5</name>
</gene>
<comment type="function">
    <text evidence="1">Putative acid-stable proteinase inhibitor.</text>
</comment>
<comment type="subcellular location">
    <subcellularLocation>
        <location evidence="4">Secreted</location>
    </subcellularLocation>
</comment>
<proteinExistence type="inferred from homology"/>